<proteinExistence type="inferred from homology"/>
<evidence type="ECO:0000255" key="1">
    <source>
        <dbReference type="HAMAP-Rule" id="MF_00014"/>
    </source>
</evidence>
<reference key="1">
    <citation type="journal article" date="2008" name="Genome Res.">
        <title>Insights from the complete genome sequence of Mycobacterium marinum on the evolution of Mycobacterium tuberculosis.</title>
        <authorList>
            <person name="Stinear T.P."/>
            <person name="Seemann T."/>
            <person name="Harrison P.F."/>
            <person name="Jenkin G.A."/>
            <person name="Davies J.K."/>
            <person name="Johnson P.D."/>
            <person name="Abdellah Z."/>
            <person name="Arrowsmith C."/>
            <person name="Chillingworth T."/>
            <person name="Churcher C."/>
            <person name="Clarke K."/>
            <person name="Cronin A."/>
            <person name="Davis P."/>
            <person name="Goodhead I."/>
            <person name="Holroyd N."/>
            <person name="Jagels K."/>
            <person name="Lord A."/>
            <person name="Moule S."/>
            <person name="Mungall K."/>
            <person name="Norbertczak H."/>
            <person name="Quail M.A."/>
            <person name="Rabbinowitsch E."/>
            <person name="Walker D."/>
            <person name="White B."/>
            <person name="Whitehead S."/>
            <person name="Small P.L."/>
            <person name="Brosch R."/>
            <person name="Ramakrishnan L."/>
            <person name="Fischbach M.A."/>
            <person name="Parkhill J."/>
            <person name="Cole S.T."/>
        </authorList>
    </citation>
    <scope>NUCLEOTIDE SEQUENCE [LARGE SCALE GENOMIC DNA]</scope>
    <source>
        <strain>ATCC BAA-535 / M</strain>
    </source>
</reference>
<feature type="chain" id="PRO_1000089509" description="Ribosome maturation factor RimM">
    <location>
        <begin position="1"/>
        <end position="174"/>
    </location>
</feature>
<feature type="domain" description="PRC barrel" evidence="1">
    <location>
        <begin position="96"/>
        <end position="169"/>
    </location>
</feature>
<name>RIMM_MYCMM</name>
<protein>
    <recommendedName>
        <fullName evidence="1">Ribosome maturation factor RimM</fullName>
    </recommendedName>
</protein>
<comment type="function">
    <text evidence="1">An accessory protein needed during the final step in the assembly of 30S ribosomal subunit, possibly for assembly of the head region. Essential for efficient processing of 16S rRNA. May be needed both before and after RbfA during the maturation of 16S rRNA. It has affinity for free ribosomal 30S subunits but not for 70S ribosomes.</text>
</comment>
<comment type="subunit">
    <text evidence="1">Binds ribosomal protein uS19.</text>
</comment>
<comment type="subcellular location">
    <subcellularLocation>
        <location evidence="1">Cytoplasm</location>
    </subcellularLocation>
</comment>
<comment type="domain">
    <text evidence="1">The PRC barrel domain binds ribosomal protein uS19.</text>
</comment>
<comment type="similarity">
    <text evidence="1">Belongs to the RimM family.</text>
</comment>
<organism>
    <name type="scientific">Mycobacterium marinum (strain ATCC BAA-535 / M)</name>
    <dbReference type="NCBI Taxonomy" id="216594"/>
    <lineage>
        <taxon>Bacteria</taxon>
        <taxon>Bacillati</taxon>
        <taxon>Actinomycetota</taxon>
        <taxon>Actinomycetes</taxon>
        <taxon>Mycobacteriales</taxon>
        <taxon>Mycobacteriaceae</taxon>
        <taxon>Mycobacterium</taxon>
        <taxon>Mycobacterium ulcerans group</taxon>
    </lineage>
</organism>
<keyword id="KW-0143">Chaperone</keyword>
<keyword id="KW-0963">Cytoplasm</keyword>
<keyword id="KW-1185">Reference proteome</keyword>
<keyword id="KW-0690">Ribosome biogenesis</keyword>
<keyword id="KW-0698">rRNA processing</keyword>
<gene>
    <name evidence="1" type="primary">rimM</name>
    <name type="ordered locus">MMAR_1801</name>
</gene>
<accession>B2HJL4</accession>
<sequence length="174" mass="18606">MELVIGRVVKAHGITGEVVVEIRTDEPDRRFTPGASLRAKRSRDGGTGRNYVIEGVREHGARLLVRLAGVNDRDTADGLRGSLFVIDSADLPPIDEPDTYYDHQLEGLRVRTTAGQDVGVVAEVLHTGAGELLAVKCDSGEVLVPFVGAIVTSVSLDDRILEIDPPDGLLDLGS</sequence>
<dbReference type="EMBL" id="CP000854">
    <property type="protein sequence ID" value="ACC40250.1"/>
    <property type="molecule type" value="Genomic_DNA"/>
</dbReference>
<dbReference type="RefSeq" id="WP_012393602.1">
    <property type="nucleotide sequence ID" value="NC_010612.1"/>
</dbReference>
<dbReference type="SMR" id="B2HJL4"/>
<dbReference type="STRING" id="216594.MMAR_1801"/>
<dbReference type="KEGG" id="mmi:MMAR_1801"/>
<dbReference type="eggNOG" id="COG0806">
    <property type="taxonomic scope" value="Bacteria"/>
</dbReference>
<dbReference type="HOGENOM" id="CLU_077636_0_0_11"/>
<dbReference type="OrthoDB" id="5381335at2"/>
<dbReference type="Proteomes" id="UP000001190">
    <property type="component" value="Chromosome"/>
</dbReference>
<dbReference type="GO" id="GO:0005737">
    <property type="term" value="C:cytoplasm"/>
    <property type="evidence" value="ECO:0007669"/>
    <property type="project" value="UniProtKB-SubCell"/>
</dbReference>
<dbReference type="GO" id="GO:0005840">
    <property type="term" value="C:ribosome"/>
    <property type="evidence" value="ECO:0007669"/>
    <property type="project" value="InterPro"/>
</dbReference>
<dbReference type="GO" id="GO:0043022">
    <property type="term" value="F:ribosome binding"/>
    <property type="evidence" value="ECO:0007669"/>
    <property type="project" value="InterPro"/>
</dbReference>
<dbReference type="GO" id="GO:0042274">
    <property type="term" value="P:ribosomal small subunit biogenesis"/>
    <property type="evidence" value="ECO:0007669"/>
    <property type="project" value="UniProtKB-UniRule"/>
</dbReference>
<dbReference type="GO" id="GO:0006364">
    <property type="term" value="P:rRNA processing"/>
    <property type="evidence" value="ECO:0007669"/>
    <property type="project" value="UniProtKB-UniRule"/>
</dbReference>
<dbReference type="Gene3D" id="2.30.30.240">
    <property type="entry name" value="PRC-barrel domain"/>
    <property type="match status" value="1"/>
</dbReference>
<dbReference type="Gene3D" id="2.40.30.60">
    <property type="entry name" value="RimM"/>
    <property type="match status" value="1"/>
</dbReference>
<dbReference type="HAMAP" id="MF_00014">
    <property type="entry name" value="Ribosome_mat_RimM"/>
    <property type="match status" value="1"/>
</dbReference>
<dbReference type="InterPro" id="IPR011033">
    <property type="entry name" value="PRC_barrel-like_sf"/>
</dbReference>
<dbReference type="InterPro" id="IPR056792">
    <property type="entry name" value="PRC_RimM"/>
</dbReference>
<dbReference type="InterPro" id="IPR011961">
    <property type="entry name" value="RimM"/>
</dbReference>
<dbReference type="InterPro" id="IPR002676">
    <property type="entry name" value="RimM_N"/>
</dbReference>
<dbReference type="InterPro" id="IPR036976">
    <property type="entry name" value="RimM_N_sf"/>
</dbReference>
<dbReference type="InterPro" id="IPR009000">
    <property type="entry name" value="Transl_B-barrel_sf"/>
</dbReference>
<dbReference type="NCBIfam" id="TIGR02273">
    <property type="entry name" value="16S_RimM"/>
    <property type="match status" value="1"/>
</dbReference>
<dbReference type="PANTHER" id="PTHR33692">
    <property type="entry name" value="RIBOSOME MATURATION FACTOR RIMM"/>
    <property type="match status" value="1"/>
</dbReference>
<dbReference type="PANTHER" id="PTHR33692:SF1">
    <property type="entry name" value="RIBOSOME MATURATION FACTOR RIMM"/>
    <property type="match status" value="1"/>
</dbReference>
<dbReference type="Pfam" id="PF24986">
    <property type="entry name" value="PRC_RimM"/>
    <property type="match status" value="1"/>
</dbReference>
<dbReference type="Pfam" id="PF01782">
    <property type="entry name" value="RimM"/>
    <property type="match status" value="1"/>
</dbReference>
<dbReference type="SUPFAM" id="SSF50346">
    <property type="entry name" value="PRC-barrel domain"/>
    <property type="match status" value="1"/>
</dbReference>
<dbReference type="SUPFAM" id="SSF50447">
    <property type="entry name" value="Translation proteins"/>
    <property type="match status" value="1"/>
</dbReference>